<feature type="chain" id="PRO_1000199723" description="UPF0370 protein YpfN">
    <location>
        <begin position="1"/>
        <end position="66"/>
    </location>
</feature>
<feature type="transmembrane region" description="Helical" evidence="1">
    <location>
        <begin position="4"/>
        <end position="24"/>
    </location>
</feature>
<feature type="region of interest" description="Disordered" evidence="2">
    <location>
        <begin position="39"/>
        <end position="66"/>
    </location>
</feature>
<feature type="compositionally biased region" description="Basic and acidic residues" evidence="2">
    <location>
        <begin position="42"/>
        <end position="51"/>
    </location>
</feature>
<protein>
    <recommendedName>
        <fullName evidence="1">UPF0370 protein YpfN</fullName>
    </recommendedName>
</protein>
<organism>
    <name type="scientific">Escherichia coli O45:K1 (strain S88 / ExPEC)</name>
    <dbReference type="NCBI Taxonomy" id="585035"/>
    <lineage>
        <taxon>Bacteria</taxon>
        <taxon>Pseudomonadati</taxon>
        <taxon>Pseudomonadota</taxon>
        <taxon>Gammaproteobacteria</taxon>
        <taxon>Enterobacterales</taxon>
        <taxon>Enterobacteriaceae</taxon>
        <taxon>Escherichia</taxon>
    </lineage>
</organism>
<gene>
    <name evidence="1" type="primary">ypfN</name>
    <name type="ordered locus">ECS88_2653</name>
</gene>
<keyword id="KW-1003">Cell membrane</keyword>
<keyword id="KW-0472">Membrane</keyword>
<keyword id="KW-1185">Reference proteome</keyword>
<keyword id="KW-0812">Transmembrane</keyword>
<keyword id="KW-1133">Transmembrane helix</keyword>
<name>YPFN_ECO45</name>
<comment type="subcellular location">
    <subcellularLocation>
        <location evidence="1">Cell membrane</location>
        <topology evidence="1">Single-pass membrane protein</topology>
    </subcellularLocation>
</comment>
<comment type="similarity">
    <text evidence="1">Belongs to the UPF0370 family.</text>
</comment>
<evidence type="ECO:0000255" key="1">
    <source>
        <dbReference type="HAMAP-Rule" id="MF_01566"/>
    </source>
</evidence>
<evidence type="ECO:0000256" key="2">
    <source>
        <dbReference type="SAM" id="MobiDB-lite"/>
    </source>
</evidence>
<accession>B7MHW5</accession>
<proteinExistence type="inferred from homology"/>
<sequence>MDWLAKYWWILVIVFLVGVLLNVIKDLKRVDHKKFLANKPELPPHRDFNDKWDDDDDWPKKDQPKK</sequence>
<dbReference type="EMBL" id="CU928161">
    <property type="protein sequence ID" value="CAR03923.1"/>
    <property type="molecule type" value="Genomic_DNA"/>
</dbReference>
<dbReference type="RefSeq" id="WP_000383836.1">
    <property type="nucleotide sequence ID" value="NC_011742.1"/>
</dbReference>
<dbReference type="SMR" id="B7MHW5"/>
<dbReference type="KEGG" id="ecz:ECS88_2653"/>
<dbReference type="HOGENOM" id="CLU_198936_0_0_6"/>
<dbReference type="Proteomes" id="UP000000747">
    <property type="component" value="Chromosome"/>
</dbReference>
<dbReference type="GO" id="GO:0005886">
    <property type="term" value="C:plasma membrane"/>
    <property type="evidence" value="ECO:0007669"/>
    <property type="project" value="UniProtKB-SubCell"/>
</dbReference>
<dbReference type="HAMAP" id="MF_01566">
    <property type="entry name" value="UPF0370"/>
    <property type="match status" value="1"/>
</dbReference>
<dbReference type="InterPro" id="IPR020910">
    <property type="entry name" value="UPF0370"/>
</dbReference>
<dbReference type="NCBIfam" id="NF010185">
    <property type="entry name" value="PRK13664.1"/>
    <property type="match status" value="1"/>
</dbReference>
<dbReference type="Pfam" id="PF13980">
    <property type="entry name" value="UPF0370"/>
    <property type="match status" value="1"/>
</dbReference>
<reference key="1">
    <citation type="journal article" date="2009" name="PLoS Genet.">
        <title>Organised genome dynamics in the Escherichia coli species results in highly diverse adaptive paths.</title>
        <authorList>
            <person name="Touchon M."/>
            <person name="Hoede C."/>
            <person name="Tenaillon O."/>
            <person name="Barbe V."/>
            <person name="Baeriswyl S."/>
            <person name="Bidet P."/>
            <person name="Bingen E."/>
            <person name="Bonacorsi S."/>
            <person name="Bouchier C."/>
            <person name="Bouvet O."/>
            <person name="Calteau A."/>
            <person name="Chiapello H."/>
            <person name="Clermont O."/>
            <person name="Cruveiller S."/>
            <person name="Danchin A."/>
            <person name="Diard M."/>
            <person name="Dossat C."/>
            <person name="Karoui M.E."/>
            <person name="Frapy E."/>
            <person name="Garry L."/>
            <person name="Ghigo J.M."/>
            <person name="Gilles A.M."/>
            <person name="Johnson J."/>
            <person name="Le Bouguenec C."/>
            <person name="Lescat M."/>
            <person name="Mangenot S."/>
            <person name="Martinez-Jehanne V."/>
            <person name="Matic I."/>
            <person name="Nassif X."/>
            <person name="Oztas S."/>
            <person name="Petit M.A."/>
            <person name="Pichon C."/>
            <person name="Rouy Z."/>
            <person name="Ruf C.S."/>
            <person name="Schneider D."/>
            <person name="Tourret J."/>
            <person name="Vacherie B."/>
            <person name="Vallenet D."/>
            <person name="Medigue C."/>
            <person name="Rocha E.P.C."/>
            <person name="Denamur E."/>
        </authorList>
    </citation>
    <scope>NUCLEOTIDE SEQUENCE [LARGE SCALE GENOMIC DNA]</scope>
    <source>
        <strain>S88 / ExPEC</strain>
    </source>
</reference>